<organism>
    <name type="scientific">Rattus norvegicus</name>
    <name type="common">Rat</name>
    <dbReference type="NCBI Taxonomy" id="10116"/>
    <lineage>
        <taxon>Eukaryota</taxon>
        <taxon>Metazoa</taxon>
        <taxon>Chordata</taxon>
        <taxon>Craniata</taxon>
        <taxon>Vertebrata</taxon>
        <taxon>Euteleostomi</taxon>
        <taxon>Mammalia</taxon>
        <taxon>Eutheria</taxon>
        <taxon>Euarchontoglires</taxon>
        <taxon>Glires</taxon>
        <taxon>Rodentia</taxon>
        <taxon>Myomorpha</taxon>
        <taxon>Muroidea</taxon>
        <taxon>Muridae</taxon>
        <taxon>Murinae</taxon>
        <taxon>Rattus</taxon>
    </lineage>
</organism>
<accession>P15390</accession>
<accession>O70611</accession>
<keyword id="KW-0002">3D-structure</keyword>
<keyword id="KW-1003">Cell membrane</keyword>
<keyword id="KW-1015">Disulfide bond</keyword>
<keyword id="KW-0325">Glycoprotein</keyword>
<keyword id="KW-0407">Ion channel</keyword>
<keyword id="KW-0406">Ion transport</keyword>
<keyword id="KW-0472">Membrane</keyword>
<keyword id="KW-0597">Phosphoprotein</keyword>
<keyword id="KW-1185">Reference proteome</keyword>
<keyword id="KW-0677">Repeat</keyword>
<keyword id="KW-0915">Sodium</keyword>
<keyword id="KW-0894">Sodium channel</keyword>
<keyword id="KW-0739">Sodium transport</keyword>
<keyword id="KW-0812">Transmembrane</keyword>
<keyword id="KW-1133">Transmembrane helix</keyword>
<keyword id="KW-0813">Transport</keyword>
<keyword id="KW-0851">Voltage-gated channel</keyword>
<name>SCN4A_RAT</name>
<reference key="1">
    <citation type="journal article" date="1989" name="Neuron">
        <title>Primary structure and functional expression of a mammalian skeletal muscle sodium channel.</title>
        <authorList>
            <person name="Trimmer J.S."/>
            <person name="Cooperman S.S."/>
            <person name="Tomiko S.A."/>
            <person name="Zhou J."/>
            <person name="Crean S.M."/>
            <person name="Boyle M.B."/>
            <person name="Kallen R.G."/>
            <person name="Sheng Z."/>
            <person name="Barchi R.L."/>
            <person name="Sigworth F.J."/>
            <person name="Goodman R.H."/>
            <person name="Agnew W.S."/>
            <person name="Mandel G."/>
        </authorList>
    </citation>
    <scope>NUCLEOTIDE SEQUENCE [MRNA]</scope>
    <scope>FUNCTION</scope>
    <scope>SUBCELLULAR LOCATION</scope>
</reference>
<reference key="2">
    <citation type="journal article" date="1998" name="FEBS Lett.">
        <title>Expression of skeletal muscle-type voltage-gated Na+ channel in rat and human prostate cancer cell lines.</title>
        <authorList>
            <person name="Diss J.K.J."/>
            <person name="Stewart D."/>
            <person name="Fraser S.P."/>
            <person name="Black J.A."/>
            <person name="Dibb-Hajj S."/>
            <person name="Waxman S.G."/>
            <person name="Archer S.N."/>
            <person name="Djamgoz M.B.A."/>
        </authorList>
    </citation>
    <scope>NUCLEOTIDE SEQUENCE [MRNA]</scope>
    <scope>TISSUE SPECIFICITY</scope>
    <scope>VARIANTS ILE-120; HIS-916; CYS-1202; ASP-1257; GLY-1755 AND LYS-1803</scope>
    <source>
        <strain>COP</strain>
        <tissue>Prostate</tissue>
    </source>
</reference>
<reference key="3">
    <citation type="journal article" date="2005" name="Curr. Biol.">
        <title>Genetic basis of tetrodotoxin resistance in pufferfishes.</title>
        <authorList>
            <person name="Venkatesh B."/>
            <person name="Lu S.Q."/>
            <person name="Dandona N."/>
            <person name="See S.L."/>
            <person name="Brenner S."/>
            <person name="Soong T.W."/>
        </authorList>
    </citation>
    <scope>FUNCTION</scope>
    <scope>TRANSPORTER ACTIVITY</scope>
    <scope>SUBCELLULAR LOCATION</scope>
    <scope>ACTIVITY REGULATION</scope>
    <scope>MUTAGENESIS OF TYR-401</scope>
</reference>
<reference key="4">
    <citation type="journal article" date="2012" name="Nat. Commun.">
        <title>Quantitative maps of protein phosphorylation sites across 14 different rat organs and tissues.</title>
        <authorList>
            <person name="Lundby A."/>
            <person name="Secher A."/>
            <person name="Lage K."/>
            <person name="Nordsborg N.B."/>
            <person name="Dmytriyev A."/>
            <person name="Lundby C."/>
            <person name="Olsen J.V."/>
        </authorList>
    </citation>
    <scope>PHOSPHORYLATION [LARGE SCALE ANALYSIS] AT SER-487</scope>
    <scope>IDENTIFICATION BY MASS SPECTROMETRY [LARGE SCALE ANALYSIS]</scope>
</reference>
<reference key="5">
    <citation type="journal article" date="2012" name="Proc. Natl. Acad. Sci. U.S.A.">
        <title>Marked difference in saxitoxin and tetrodotoxin affinity for the human nociceptive voltage-gated sodium channel (Nav1.7) [corrected].</title>
        <authorList>
            <person name="Walker J.R."/>
            <person name="Novick P.A."/>
            <person name="Parsons W.H."/>
            <person name="McGregor M."/>
            <person name="Zablocki J."/>
            <person name="Pande V.S."/>
            <person name="Du Bois J."/>
        </authorList>
    </citation>
    <scope>ACTIVITY REGULATION</scope>
    <scope>MUTAGENESIS OF 1240-MET-ILE-1241</scope>
</reference>
<reference key="6">
    <citation type="journal article" date="2012" name="Proc. Natl. Acad. Sci. U.S.A.">
        <authorList>
            <person name="Walker J.R."/>
            <person name="Novick P.A."/>
            <person name="Parsons W.H."/>
            <person name="McGregor M."/>
            <person name="Zablocki J."/>
            <person name="Pande V.S."/>
            <person name="Du Bois J."/>
        </authorList>
    </citation>
    <scope>ERRATUM OF PUBMED:23077250</scope>
</reference>
<reference key="7">
    <citation type="journal article" date="2014" name="Proc. Natl. Acad. Sci. U.S.A.">
        <title>A disulfide tether stabilizes the block of sodium channels by the conotoxin muO[section sign]-GVIIJ.</title>
        <authorList>
            <person name="Gajewiak J."/>
            <person name="Azam L."/>
            <person name="Imperial J."/>
            <person name="Walewska A."/>
            <person name="Green B.R."/>
            <person name="Bandyopadhyay P.K."/>
            <person name="Raghuraman S."/>
            <person name="Ueberheide B."/>
            <person name="Bern M."/>
            <person name="Zhou H.M."/>
            <person name="Minassian N.A."/>
            <person name="Hagan R.H."/>
            <person name="Flinspach M."/>
            <person name="Liu Y."/>
            <person name="Bulaj G."/>
            <person name="Wickenden A.D."/>
            <person name="Olivera B.M."/>
            <person name="Yoshikami D."/>
            <person name="Zhang M.M."/>
        </authorList>
    </citation>
    <scope>TRANSPORTER ACTIVITY</scope>
    <scope>ACTIVITY REGULATION</scope>
</reference>
<reference key="8">
    <citation type="journal article" date="2017" name="Eur. Biophys. J.">
        <title>Characterization of specific allosteric effects of the Na+ channel beta1 subunit on the Nav1.4 isoform.</title>
        <authorList>
            <person name="Sanchez-Solano A."/>
            <person name="Islas A.A."/>
            <person name="Scior T."/>
            <person name="Paiz-Candia B."/>
            <person name="Millan-PerezPena L."/>
            <person name="Salinas-Stefanon E.M."/>
        </authorList>
    </citation>
    <scope>FUNCTION</scope>
    <scope>TRANSPORTER ACTIVITY</scope>
    <scope>INTERACTION WITH SCN1B</scope>
    <scope>ACTIVITY REGULATION</scope>
    <scope>MUTAGENESIS OF 1303-ILE--MET-1305</scope>
</reference>
<reference key="9">
    <citation type="journal article" date="2017" name="Sci. Rep.">
        <title>The tarantula toxin beta/delta-TRTX-Pre1a highlights the importance of the S1-S2 voltage-sensor region for sodium channel subtype selectivity.</title>
        <authorList>
            <person name="Wingerd J.S."/>
            <person name="Mozar C.A."/>
            <person name="Ussing C.A."/>
            <person name="Murali S.S."/>
            <person name="Chin Y.K."/>
            <person name="Cristofori-Armstrong B."/>
            <person name="Durek T."/>
            <person name="Gilchrist J."/>
            <person name="Vaughan C.W."/>
            <person name="Bosmans F."/>
            <person name="Adams D.J."/>
            <person name="Lewis R.J."/>
            <person name="Alewood P.F."/>
            <person name="Mobli M."/>
            <person name="Christie M.J."/>
            <person name="Rash L.D."/>
        </authorList>
    </citation>
    <scope>MUTAGENESIS OF TYR-1379 AND ASN-1380</scope>
</reference>
<reference key="10">
    <citation type="journal article" date="2018" name="Bioorg. Med. Chem.">
        <title>Veratridine binding to a transmembrane helix of sodium channel Nav1.4 determined by solid-state NMR.</title>
        <authorList>
            <person name="Niitsu A."/>
            <person name="Egawa A."/>
            <person name="Ikeda K."/>
            <person name="Tachibana K."/>
            <person name="Fujiwara T."/>
        </authorList>
    </citation>
    <scope>STRUCTURE BY NMR OF 1567-1594</scope>
</reference>
<dbReference type="EMBL" id="M26643">
    <property type="protein sequence ID" value="AAA41682.1"/>
    <property type="molecule type" value="mRNA"/>
</dbReference>
<dbReference type="EMBL" id="Y17153">
    <property type="protein sequence ID" value="CAA76659.1"/>
    <property type="molecule type" value="mRNA"/>
</dbReference>
<dbReference type="PIR" id="JN0007">
    <property type="entry name" value="CHRTM1"/>
</dbReference>
<dbReference type="RefSeq" id="NP_037310.1">
    <property type="nucleotide sequence ID" value="NM_013178.1"/>
</dbReference>
<dbReference type="PDB" id="5JR0">
    <property type="method" value="NMR"/>
    <property type="chains" value="A=1567-1594"/>
</dbReference>
<dbReference type="PDB" id="6MUE">
    <property type="method" value="X-ray"/>
    <property type="resolution" value="1.90 A"/>
    <property type="chains" value="B=1716-1744"/>
</dbReference>
<dbReference type="PDBsum" id="5JR0"/>
<dbReference type="PDBsum" id="6MUE"/>
<dbReference type="SMR" id="P15390"/>
<dbReference type="BioGRID" id="247751">
    <property type="interactions" value="2"/>
</dbReference>
<dbReference type="FunCoup" id="P15390">
    <property type="interactions" value="371"/>
</dbReference>
<dbReference type="STRING" id="10116.ENSRNOP00000016841"/>
<dbReference type="BindingDB" id="P15390"/>
<dbReference type="ChEMBL" id="CHEMBL3509"/>
<dbReference type="DrugCentral" id="P15390"/>
<dbReference type="GuidetoPHARMACOLOGY" id="581"/>
<dbReference type="GlyCosmos" id="P15390">
    <property type="glycosylation" value="9 sites, No reported glycans"/>
</dbReference>
<dbReference type="GlyGen" id="P15390">
    <property type="glycosylation" value="11 sites"/>
</dbReference>
<dbReference type="iPTMnet" id="P15390"/>
<dbReference type="PhosphoSitePlus" id="P15390"/>
<dbReference type="PaxDb" id="10116-ENSRNOP00000016841"/>
<dbReference type="ABCD" id="P15390">
    <property type="antibodies" value="1 sequenced antibody"/>
</dbReference>
<dbReference type="GeneID" id="25722"/>
<dbReference type="KEGG" id="rno:25722"/>
<dbReference type="UCSC" id="RGD:3636">
    <property type="organism name" value="rat"/>
</dbReference>
<dbReference type="AGR" id="RGD:3636"/>
<dbReference type="CTD" id="6329"/>
<dbReference type="RGD" id="3636">
    <property type="gene designation" value="Scn4a"/>
</dbReference>
<dbReference type="eggNOG" id="KOG2301">
    <property type="taxonomic scope" value="Eukaryota"/>
</dbReference>
<dbReference type="InParanoid" id="P15390"/>
<dbReference type="PhylomeDB" id="P15390"/>
<dbReference type="PRO" id="PR:P15390"/>
<dbReference type="Proteomes" id="UP000002494">
    <property type="component" value="Unplaced"/>
</dbReference>
<dbReference type="GO" id="GO:0030424">
    <property type="term" value="C:axon"/>
    <property type="evidence" value="ECO:0000318"/>
    <property type="project" value="GO_Central"/>
</dbReference>
<dbReference type="GO" id="GO:0005886">
    <property type="term" value="C:plasma membrane"/>
    <property type="evidence" value="ECO:0000314"/>
    <property type="project" value="UniProtKB"/>
</dbReference>
<dbReference type="GO" id="GO:0001518">
    <property type="term" value="C:voltage-gated sodium channel complex"/>
    <property type="evidence" value="ECO:0000250"/>
    <property type="project" value="UniProtKB"/>
</dbReference>
<dbReference type="GO" id="GO:0005248">
    <property type="term" value="F:voltage-gated sodium channel activity"/>
    <property type="evidence" value="ECO:0000250"/>
    <property type="project" value="UniProtKB"/>
</dbReference>
<dbReference type="GO" id="GO:0015871">
    <property type="term" value="P:choline transport"/>
    <property type="evidence" value="ECO:0000315"/>
    <property type="project" value="RGD"/>
</dbReference>
<dbReference type="GO" id="GO:0086010">
    <property type="term" value="P:membrane depolarization during action potential"/>
    <property type="evidence" value="ECO:0000318"/>
    <property type="project" value="GO_Central"/>
</dbReference>
<dbReference type="GO" id="GO:0006812">
    <property type="term" value="P:monoatomic cation transport"/>
    <property type="evidence" value="ECO:0000315"/>
    <property type="project" value="RGD"/>
</dbReference>
<dbReference type="GO" id="GO:0019228">
    <property type="term" value="P:neuronal action potential"/>
    <property type="evidence" value="ECO:0000318"/>
    <property type="project" value="GO_Central"/>
</dbReference>
<dbReference type="GO" id="GO:0006813">
    <property type="term" value="P:potassium ion transport"/>
    <property type="evidence" value="ECO:0000315"/>
    <property type="project" value="RGD"/>
</dbReference>
<dbReference type="GO" id="GO:0100001">
    <property type="term" value="P:regulation of skeletal muscle contraction by action potential"/>
    <property type="evidence" value="ECO:0000250"/>
    <property type="project" value="UniProtKB"/>
</dbReference>
<dbReference type="GO" id="GO:0035725">
    <property type="term" value="P:sodium ion transmembrane transport"/>
    <property type="evidence" value="ECO:0000314"/>
    <property type="project" value="UniProtKB"/>
</dbReference>
<dbReference type="GO" id="GO:0006814">
    <property type="term" value="P:sodium ion transport"/>
    <property type="evidence" value="ECO:0000314"/>
    <property type="project" value="RGD"/>
</dbReference>
<dbReference type="CDD" id="cd13433">
    <property type="entry name" value="Na_channel_gate"/>
    <property type="match status" value="1"/>
</dbReference>
<dbReference type="FunFam" id="1.10.238.10:FF:000002">
    <property type="entry name" value="Sodium channel protein"/>
    <property type="match status" value="1"/>
</dbReference>
<dbReference type="FunFam" id="1.10.287.70:FF:000001">
    <property type="entry name" value="Sodium channel protein"/>
    <property type="match status" value="1"/>
</dbReference>
<dbReference type="FunFam" id="1.10.287.70:FF:000006">
    <property type="entry name" value="Sodium channel protein"/>
    <property type="match status" value="1"/>
</dbReference>
<dbReference type="FunFam" id="1.20.120.350:FF:000002">
    <property type="entry name" value="Sodium channel protein"/>
    <property type="match status" value="1"/>
</dbReference>
<dbReference type="FunFam" id="1.20.120.350:FF:000004">
    <property type="entry name" value="Sodium channel protein"/>
    <property type="match status" value="1"/>
</dbReference>
<dbReference type="FunFam" id="1.20.120.350:FF:000005">
    <property type="entry name" value="Sodium channel protein"/>
    <property type="match status" value="1"/>
</dbReference>
<dbReference type="FunFam" id="1.20.5.1190:FF:000001">
    <property type="entry name" value="Sodium channel protein"/>
    <property type="match status" value="1"/>
</dbReference>
<dbReference type="FunFam" id="1.20.120.350:FF:000003">
    <property type="entry name" value="Voltage-dependent sodium channel"/>
    <property type="match status" value="1"/>
</dbReference>
<dbReference type="Gene3D" id="1.10.287.70">
    <property type="match status" value="4"/>
</dbReference>
<dbReference type="Gene3D" id="1.10.238.10">
    <property type="entry name" value="EF-hand"/>
    <property type="match status" value="1"/>
</dbReference>
<dbReference type="Gene3D" id="1.20.5.1190">
    <property type="entry name" value="iswi atpase"/>
    <property type="match status" value="1"/>
</dbReference>
<dbReference type="Gene3D" id="1.20.120.350">
    <property type="entry name" value="Voltage-gated potassium channels. Chain C"/>
    <property type="match status" value="4"/>
</dbReference>
<dbReference type="InterPro" id="IPR005821">
    <property type="entry name" value="Ion_trans_dom"/>
</dbReference>
<dbReference type="InterPro" id="IPR008052">
    <property type="entry name" value="Na_channel_a4su_mammal"/>
</dbReference>
<dbReference type="InterPro" id="IPR001696">
    <property type="entry name" value="Na_channel_asu"/>
</dbReference>
<dbReference type="InterPro" id="IPR044564">
    <property type="entry name" value="Na_chnl_inactivation_gate"/>
</dbReference>
<dbReference type="InterPro" id="IPR010526">
    <property type="entry name" value="Na_trans_assoc_dom"/>
</dbReference>
<dbReference type="InterPro" id="IPR043203">
    <property type="entry name" value="VGCC_Ca_Na"/>
</dbReference>
<dbReference type="InterPro" id="IPR027359">
    <property type="entry name" value="Volt_channel_dom_sf"/>
</dbReference>
<dbReference type="PANTHER" id="PTHR10037:SF223">
    <property type="entry name" value="SODIUM CHANNEL PROTEIN TYPE 4 SUBUNIT ALPHA"/>
    <property type="match status" value="1"/>
</dbReference>
<dbReference type="PANTHER" id="PTHR10037">
    <property type="entry name" value="VOLTAGE-GATED CATION CHANNEL CALCIUM AND SODIUM"/>
    <property type="match status" value="1"/>
</dbReference>
<dbReference type="Pfam" id="PF00520">
    <property type="entry name" value="Ion_trans"/>
    <property type="match status" value="4"/>
</dbReference>
<dbReference type="Pfam" id="PF24609">
    <property type="entry name" value="IQ_SCN5A_C"/>
    <property type="match status" value="1"/>
</dbReference>
<dbReference type="Pfam" id="PF06512">
    <property type="entry name" value="Na_trans_assoc"/>
    <property type="match status" value="1"/>
</dbReference>
<dbReference type="PRINTS" id="PR00170">
    <property type="entry name" value="NACHANNEL"/>
</dbReference>
<dbReference type="PRINTS" id="PR01665">
    <property type="entry name" value="NACHANNEL4"/>
</dbReference>
<dbReference type="SUPFAM" id="SSF81324">
    <property type="entry name" value="Voltage-gated potassium channels"/>
    <property type="match status" value="4"/>
</dbReference>
<dbReference type="PROSITE" id="PS50096">
    <property type="entry name" value="IQ"/>
    <property type="match status" value="1"/>
</dbReference>
<sequence length="1840" mass="208867">MASSSLPNLVPPGPHCLRPFTPESLAAIEQRAVEEEARLQRNKQMEIEEPERKPRSDLEAGKNLPLIYGDPPPEVIGIPLEDLDPYYSDKKTFIVLNKGKAIFRFSATPALYLLSPFSIVRRVAIKVLIHALFSMFIMITILTNCVFMTMSNPPSWSKHVEYTFTGIYTFESLIKMLARGFCIDDFTFLRDPWNWLDFSVITMAYVTEFVDLGNISALRTFRVLRALKTITVIPGLKTIVGALIQSVKKLSDVMILTVFCLSVFALVGLQLFMGNLRQKCVRWPPPMNDTNTTWYGNDTWYSNDTWYGNDTWYINDTWNSQESWAGNSTFDWEAYINDEGNFYFLEGSNDALLCGNSSDAGHCPEGYECIKAGRNPNYGYTSYDTFSWAFLALFRLMTQDYWENLFQLTLRAAGKTYMIFFVVIIFLGSFYLINLILAVVAMAYAEQNEATLAEDQEKEEEFQQMLEKYKKHQEELEKAKAAQALESGEEADGDPTHNKDCNGSLDASGEKGPPRPSCSADSAISDAMEELEEAHQKCPPWWYKCAHKVLIWNCCAPWVKFKHIIYLIVMDPFVDLGITICIVLNTLFMAMEHYPMTEHFDNVLSVGNLVFTGIFTAEMVLKLIAMDPYEYFQQGWNIFDSFIVTLSLVELGLANVQGLSVLRSFRLLRVFKLAKSWPTLNMLIKIIGNSVGALGNLTLVLAIIVFIFAVVGMQLFGKSYKECVCKIASDCNLPRWHMNDFFHSFLIVFRILCGEWIETMWDCMEVAGQAMCLTVFLMVMVIGNLVVLNLFLALLLSSFSADSLAASDEDGEMNNLQIAIGRIKWGIGFAKTFLLGLLRGKILSPKEIILSLGEPGGAGENAEESTPEDEKKEPPPEDKELKDNHILNHVGLTDGPRSSIELDHLNFINNPYLTIQVPIASEESDLEMPTEEETDAFSEPEDIKKPLQPLYDGNSSVCSTADYKPPEEDPEEQAEENPEGEQPEECFTEACVKRCPCLYVDISQGRGKMWWTLRRACFKIVEHNWFETFIVFMILLSSGALAFEDIYIEQRRVIRTILEYADKVFTYIFILEMLLKWVAYGFKVYFTNAWCWLDFLIVDVSIISLVANWLGYSELGPIKSLRTLRALRPLRALSRFEGMRVVVNALLGAIPSIMNVLLVCLIFWLIFSIMGVNLFAGKFYYCVNTTTSERFDISVVNNKSESESLMYTGQVRWMNVKVNYDNVGLGYLSLLQVATFKGWMDIMYAAVDSREKEEQPHYEVNLYMYLYFVIFIIFGSFFTLNLFIGVIIDNFNQQKKKFGGKDIFMTEEQKKYYNAMKKLGSKKPQKPIPRPQNKIQGMVYDFVTKQVFDISIMILICLNMVTMMVETDDQSQLKVDILYNINMVFIIIFTGECVLKMFALRHYYFTIGWNIFDFVVVILSIVGLALSDLIQKYFVSPTLFRVIRLARIGRVLRLIRGAKGIRTLLFALMMSLPALFNIGLLLFLVMFIYSIFGMSNFAYVKKESGIDDMFNFETFGNSIICLFEITTSAGWDGLLNPILNSGPPDCDPTLENPGTNVRGDCGNPSIGICFFCSYIIISFLIVVNMYIAIILENFNVATEESSEPLSEDDFEMFYETWEKFDPDATQFIDYSRLSDFVDTLQEPLKIAKPNKIKLITLDLPMVPGDKIHCLDILFALTKEVLGDSGEMDALKQTMEEKFMAANPSKVSYEPITTTLKRKQEEVCAIKIQRAYRRHLLQRSVKQASYMYRHSQDGNDDGAPEKEGLLANTMNKMYGHEKEGDGVQSQGEEEKASTEDAGPTVEPEPTSSSDTALTPSPPPLPPSSSPPQGQTVRPGVKESLV</sequence>
<comment type="function">
    <text evidence="1 5 8 9">Pore-forming subunit of Nav1.4, a voltage-gated sodium (Nav) channel that directly mediates the depolarizing phase of action potentials in excitable membranes. Navs, also called VGSCs (voltage-gated sodium channels) or VDSCs (voltage-dependent sodium channels), operate by switching between closed and open conformations depending on the voltage difference across the membrane. In the open conformation they allow Na(+) ions to selectively pass through the pore, along their electrochemical gradient. The influx of Na+ ions provokes membrane depolarization, initiating the propagation of electrical signals throughout cells and tissues (PubMed:16303569, PubMed:2559760, PubMed:28012039). Highly expressed in skeletal muscles, Nav1.4 generates the action potential crucial for muscle contraction (By similarity).</text>
</comment>
<comment type="catalytic activity">
    <reaction evidence="5 7 9">
        <text>Na(+)(in) = Na(+)(out)</text>
        <dbReference type="Rhea" id="RHEA:34963"/>
        <dbReference type="ChEBI" id="CHEBI:29101"/>
    </reaction>
</comment>
<comment type="activity regulation">
    <text evidence="5 6 7">Potently inhibited by tetrodotoxin and saxitoxin (PubMed:16303569, PubMed:23077250). Inhibited by the conotoxin GVIIJ (PubMed:24497506).</text>
</comment>
<comment type="subunit">
    <text evidence="1 9">The Nav1.4 voltage-gated sodium channel consists of an ion-conducting alpha subunit SCN4A which is functional on its own and a regulatory beta subunit SCN1B (PubMed:28012039). SCN1B strongly enhances the presence of SCN4A at the cell surface (By similarity). SCN1B is also required for rapid channel inactivation and recovery after inactivation. It prevents the decrease of channel activity in response to repetitive, high-frequency depolarizations (PubMed:28012039). Interacts with the syntrophins SNTA1, SNTB1 and SNTB2 (via PDZ domain); probably links SCN4A to the actin cytoskeleton and the extracellular matrix via the dystrophin-associated protein complex and regulates its localization in muscle cells (By similarity). Interacts with TMEM233; probable regulator of the channel (By similarity).</text>
</comment>
<comment type="subcellular location">
    <subcellularLocation>
        <location evidence="5 8 9">Cell membrane</location>
        <topology evidence="1">Multi-pass membrane protein</topology>
    </subcellularLocation>
</comment>
<comment type="tissue specificity">
    <text evidence="11">Detected in skeletal muscle.</text>
</comment>
<comment type="domain">
    <text evidence="1">The sequence contains 4 internal repeats, each with 5 hydrophobic segments (S1, S2, S3, S5, S6) and one positively charged segment (S4). Segments S4 are probably the voltage-sensors and are characterized by a series of positively charged amino acids at every third position.</text>
</comment>
<comment type="similarity">
    <text evidence="13">Belongs to the sodium channel (TC 1.A.1.10) family. Nav1.4/SCN4A subfamily.</text>
</comment>
<feature type="chain" id="PRO_0000048496" description="Sodium channel protein type 4 subunit alpha">
    <location>
        <begin position="1"/>
        <end position="1840"/>
    </location>
</feature>
<feature type="topological domain" description="Cytoplasmic" evidence="13">
    <location>
        <begin position="1"/>
        <end position="131"/>
    </location>
</feature>
<feature type="transmembrane region" description="Helical; Name=S1 of repeat I" evidence="1">
    <location>
        <begin position="132"/>
        <end position="150"/>
    </location>
</feature>
<feature type="topological domain" description="Extracellular" evidence="13">
    <location>
        <begin position="151"/>
        <end position="157"/>
    </location>
</feature>
<feature type="transmembrane region" description="Helical; Name=S2 of repeat I" evidence="1">
    <location>
        <begin position="158"/>
        <end position="178"/>
    </location>
</feature>
<feature type="topological domain" description="Cytoplasmic" evidence="13">
    <location>
        <begin position="179"/>
        <end position="192"/>
    </location>
</feature>
<feature type="transmembrane region" description="Helical; Name=S3 of repeat I" evidence="1">
    <location>
        <begin position="193"/>
        <end position="210"/>
    </location>
</feature>
<feature type="topological domain" description="Extracellular" evidence="13">
    <location>
        <begin position="211"/>
        <end position="216"/>
    </location>
</feature>
<feature type="transmembrane region" description="Helical; Name=S4 of repeat I" evidence="1">
    <location>
        <begin position="217"/>
        <end position="233"/>
    </location>
</feature>
<feature type="topological domain" description="Cytoplasmic" evidence="13">
    <location>
        <begin position="234"/>
        <end position="252"/>
    </location>
</feature>
<feature type="transmembrane region" description="Helical; Name=S5 of repeat I" evidence="1">
    <location>
        <begin position="253"/>
        <end position="272"/>
    </location>
</feature>
<feature type="topological domain" description="Extracellular" evidence="13">
    <location>
        <begin position="273"/>
        <end position="385"/>
    </location>
</feature>
<feature type="intramembrane region" description="Pore-forming" evidence="1">
    <location>
        <begin position="386"/>
        <end position="410"/>
    </location>
</feature>
<feature type="topological domain" description="Extracellular" evidence="13">
    <location>
        <begin position="411"/>
        <end position="417"/>
    </location>
</feature>
<feature type="transmembrane region" description="Helical; Name=S6 of repeat I" evidence="1">
    <location>
        <begin position="418"/>
        <end position="438"/>
    </location>
</feature>
<feature type="topological domain" description="Cytoplasmic" evidence="13">
    <location>
        <begin position="439"/>
        <end position="572"/>
    </location>
</feature>
<feature type="transmembrane region" description="Helical; Name=S1 of repeat II" evidence="1">
    <location>
        <begin position="573"/>
        <end position="591"/>
    </location>
</feature>
<feature type="topological domain" description="Extracellular" evidence="13">
    <location>
        <begin position="592"/>
        <end position="602"/>
    </location>
</feature>
<feature type="transmembrane region" description="Helical; Name=S2 of repeat II" evidence="1">
    <location>
        <begin position="603"/>
        <end position="622"/>
    </location>
</feature>
<feature type="topological domain" description="Cytoplasmic" evidence="13">
    <location>
        <begin position="623"/>
        <end position="636"/>
    </location>
</feature>
<feature type="transmembrane region" description="Helical; Name=S3 of repeat II" evidence="1">
    <location>
        <begin position="637"/>
        <end position="656"/>
    </location>
</feature>
<feature type="topological domain" description="Extracellular" evidence="13">
    <location>
        <begin position="657"/>
        <end position="658"/>
    </location>
</feature>
<feature type="transmembrane region" description="Helical; Name=S4 of repeat II" evidence="1">
    <location>
        <begin position="659"/>
        <end position="676"/>
    </location>
</feature>
<feature type="topological domain" description="Cytoplasmic" evidence="13">
    <location>
        <begin position="677"/>
        <end position="692"/>
    </location>
</feature>
<feature type="transmembrane region" description="Helical; Name=S5 of repeat II" evidence="1">
    <location>
        <begin position="693"/>
        <end position="711"/>
    </location>
</feature>
<feature type="topological domain" description="Extracellular" evidence="13">
    <location>
        <begin position="712"/>
        <end position="740"/>
    </location>
</feature>
<feature type="intramembrane region" description="Pore-forming" evidence="1">
    <location>
        <begin position="741"/>
        <end position="761"/>
    </location>
</feature>
<feature type="topological domain" description="Extracellular" evidence="13">
    <location>
        <begin position="762"/>
        <end position="772"/>
    </location>
</feature>
<feature type="transmembrane region" description="Helical; Name=S6 of repeat II" evidence="1">
    <location>
        <begin position="773"/>
        <end position="791"/>
    </location>
</feature>
<feature type="topological domain" description="Cytoplasmic" evidence="13">
    <location>
        <begin position="792"/>
        <end position="1025"/>
    </location>
</feature>
<feature type="transmembrane region" description="Helical; Name=S1 of repeat III" evidence="1">
    <location>
        <begin position="1026"/>
        <end position="1043"/>
    </location>
</feature>
<feature type="topological domain" description="Extracellular" evidence="13">
    <location>
        <begin position="1044"/>
        <end position="1056"/>
    </location>
</feature>
<feature type="transmembrane region" description="Helical; Name=S2 of repeat III" evidence="1">
    <location>
        <begin position="1057"/>
        <end position="1075"/>
    </location>
</feature>
<feature type="topological domain" description="Cytoplasmic" evidence="13">
    <location>
        <begin position="1076"/>
        <end position="1089"/>
    </location>
</feature>
<feature type="transmembrane region" description="Helical; Name=S3 of repeat III" evidence="1">
    <location>
        <begin position="1090"/>
        <end position="1108"/>
    </location>
</feature>
<feature type="topological domain" description="Extracellular" evidence="13">
    <location>
        <begin position="1109"/>
        <end position="1116"/>
    </location>
</feature>
<feature type="transmembrane region" description="Helical; Name=S4 of repeat III" evidence="1">
    <location>
        <begin position="1117"/>
        <end position="1135"/>
    </location>
</feature>
<feature type="topological domain" description="Cytoplasmic" evidence="13">
    <location>
        <begin position="1136"/>
        <end position="1152"/>
    </location>
</feature>
<feature type="transmembrane region" description="Helical; Name=S5 of repeat III" evidence="1">
    <location>
        <begin position="1153"/>
        <end position="1172"/>
    </location>
</feature>
<feature type="topological domain" description="Extracellular" evidence="13">
    <location>
        <begin position="1173"/>
        <end position="1223"/>
    </location>
</feature>
<feature type="intramembrane region" description="Pore-forming" evidence="1">
    <location>
        <begin position="1224"/>
        <end position="1245"/>
    </location>
</feature>
<feature type="topological domain" description="Extracellular" evidence="13">
    <location>
        <begin position="1246"/>
        <end position="1262"/>
    </location>
</feature>
<feature type="transmembrane region" description="Helical; Name=S6 of repeat III" evidence="1">
    <location>
        <begin position="1263"/>
        <end position="1284"/>
    </location>
</feature>
<feature type="topological domain" description="Cytoplasmic" evidence="13">
    <location>
        <begin position="1285"/>
        <end position="1347"/>
    </location>
</feature>
<feature type="transmembrane region" description="Helical; Name=S1 of repeat IV" evidence="1">
    <location>
        <begin position="1348"/>
        <end position="1365"/>
    </location>
</feature>
<feature type="topological domain" description="Extracellular" evidence="13">
    <location>
        <begin position="1366"/>
        <end position="1376"/>
    </location>
</feature>
<feature type="transmembrane region" description="Helical; Name=S2 of repeat IV" evidence="1">
    <location>
        <begin position="1377"/>
        <end position="1395"/>
    </location>
</feature>
<feature type="topological domain" description="Cytoplasmic" evidence="13">
    <location>
        <begin position="1396"/>
        <end position="1407"/>
    </location>
</feature>
<feature type="transmembrane region" description="Helical; Name=S3 of repeat IV" evidence="1">
    <location>
        <begin position="1408"/>
        <end position="1425"/>
    </location>
</feature>
<feature type="topological domain" description="Extracellular" evidence="13">
    <location>
        <begin position="1426"/>
        <end position="1438"/>
    </location>
</feature>
<feature type="transmembrane region" description="Helical; Name=S4 of repeat IV" evidence="1">
    <location>
        <begin position="1439"/>
        <end position="1455"/>
    </location>
</feature>
<feature type="topological domain" description="Cytoplasmic" evidence="13">
    <location>
        <begin position="1456"/>
        <end position="1474"/>
    </location>
</feature>
<feature type="transmembrane region" description="Helical; Name=S5 of repeat IV" evidence="1">
    <location>
        <begin position="1475"/>
        <end position="1492"/>
    </location>
</feature>
<feature type="topological domain" description="Extracellular" evidence="13">
    <location>
        <begin position="1493"/>
        <end position="1514"/>
    </location>
</feature>
<feature type="intramembrane region" description="Pore-forming" evidence="1">
    <location>
        <begin position="1515"/>
        <end position="1537"/>
    </location>
</feature>
<feature type="topological domain" description="Extracellular" evidence="13">
    <location>
        <begin position="1538"/>
        <end position="1567"/>
    </location>
</feature>
<feature type="transmembrane region" description="Helical; Name=S6 of repeat IV" evidence="1">
    <location>
        <begin position="1568"/>
        <end position="1590"/>
    </location>
</feature>
<feature type="topological domain" description="Cytoplasmic" evidence="13">
    <location>
        <begin position="1591"/>
        <end position="1840"/>
    </location>
</feature>
<feature type="repeat" description="I" evidence="13">
    <location>
        <begin position="113"/>
        <end position="448"/>
    </location>
</feature>
<feature type="repeat" description="II" evidence="13">
    <location>
        <begin position="554"/>
        <end position="826"/>
    </location>
</feature>
<feature type="repeat" description="III" evidence="13">
    <location>
        <begin position="1006"/>
        <end position="1319"/>
    </location>
</feature>
<feature type="repeat" description="IV" evidence="13">
    <location>
        <begin position="1328"/>
        <end position="1626"/>
    </location>
</feature>
<feature type="domain" description="IQ" evidence="3">
    <location>
        <begin position="1720"/>
        <end position="1749"/>
    </location>
</feature>
<feature type="region of interest" description="Disordered" evidence="4">
    <location>
        <begin position="36"/>
        <end position="63"/>
    </location>
</feature>
<feature type="region of interest" description="Disordered" evidence="4">
    <location>
        <begin position="481"/>
        <end position="522"/>
    </location>
</feature>
<feature type="region of interest" description="Disordered" evidence="4">
    <location>
        <begin position="854"/>
        <end position="884"/>
    </location>
</feature>
<feature type="region of interest" description="Disordered" evidence="4">
    <location>
        <begin position="925"/>
        <end position="983"/>
    </location>
</feature>
<feature type="region of interest" description="Important for rapid channel inactivation" evidence="9">
    <location>
        <begin position="1303"/>
        <end position="1305"/>
    </location>
</feature>
<feature type="region of interest" description="Disordered" evidence="4">
    <location>
        <begin position="1775"/>
        <end position="1840"/>
    </location>
</feature>
<feature type="compositionally biased region" description="Basic and acidic residues" evidence="4">
    <location>
        <begin position="36"/>
        <end position="60"/>
    </location>
</feature>
<feature type="compositionally biased region" description="Basic and acidic residues" evidence="4">
    <location>
        <begin position="868"/>
        <end position="884"/>
    </location>
</feature>
<feature type="compositionally biased region" description="Acidic residues" evidence="4">
    <location>
        <begin position="925"/>
        <end position="940"/>
    </location>
</feature>
<feature type="compositionally biased region" description="Acidic residues" evidence="4">
    <location>
        <begin position="968"/>
        <end position="983"/>
    </location>
</feature>
<feature type="compositionally biased region" description="Low complexity" evidence="4">
    <location>
        <begin position="1804"/>
        <end position="1813"/>
    </location>
</feature>
<feature type="compositionally biased region" description="Pro residues" evidence="4">
    <location>
        <begin position="1814"/>
        <end position="1824"/>
    </location>
</feature>
<feature type="site" description="Important for inhibition by tetrodotoxin" evidence="5">
    <location>
        <position position="401"/>
    </location>
</feature>
<feature type="modified residue" description="Phosphoserine" evidence="16">
    <location>
        <position position="487"/>
    </location>
</feature>
<feature type="glycosylation site" description="N-linked (GlcNAc...) asparagine" evidence="2">
    <location>
        <position position="288"/>
    </location>
</feature>
<feature type="glycosylation site" description="N-linked (GlcNAc...) asparagine" evidence="2">
    <location>
        <position position="291"/>
    </location>
</feature>
<feature type="glycosylation site" description="N-linked (GlcNAc...) asparagine" evidence="2">
    <location>
        <position position="297"/>
    </location>
</feature>
<feature type="glycosylation site" description="N-linked (GlcNAc...) asparagine" evidence="2">
    <location>
        <position position="303"/>
    </location>
</feature>
<feature type="glycosylation site" description="N-linked (GlcNAc...) asparagine" evidence="2">
    <location>
        <position position="309"/>
    </location>
</feature>
<feature type="glycosylation site" description="N-linked (GlcNAc...) asparagine" evidence="2">
    <location>
        <position position="315"/>
    </location>
</feature>
<feature type="glycosylation site" description="N-linked (GlcNAc...) asparagine" evidence="2">
    <location>
        <position position="327"/>
    </location>
</feature>
<feature type="glycosylation site" description="N-linked (GlcNAc...) asparagine" evidence="2">
    <location>
        <position position="356"/>
    </location>
</feature>
<feature type="glycosylation site" description="N-linked (GlcNAc...) asparagine" evidence="2">
    <location>
        <position position="1198"/>
    </location>
</feature>
<feature type="disulfide bond" evidence="1">
    <location>
        <begin position="280"/>
        <end position="354"/>
    </location>
</feature>
<feature type="disulfide bond" evidence="1">
    <location>
        <begin position="363"/>
        <end position="369"/>
    </location>
</feature>
<feature type="disulfide bond" evidence="1">
    <location>
        <begin position="725"/>
        <end position="731"/>
    </location>
</feature>
<feature type="disulfide bond" evidence="1">
    <location>
        <begin position="763"/>
        <end position="772"/>
    </location>
</feature>
<feature type="disulfide bond" evidence="1">
    <location>
        <begin position="1546"/>
        <end position="1561"/>
    </location>
</feature>
<feature type="sequence variant" description="In strain: COP; prostatic cancer cell lines." evidence="11">
    <original>V</original>
    <variation>I</variation>
    <location>
        <position position="120"/>
    </location>
</feature>
<feature type="sequence variant" description="In strain: COP; prostatic cancer cell lines." evidence="11">
    <original>Q</original>
    <variation>H</variation>
    <location>
        <position position="916"/>
    </location>
</feature>
<feature type="sequence variant" description="In strain: COP; prostatic cancer cell lines." evidence="11">
    <original>S</original>
    <variation>C</variation>
    <location>
        <position position="1202"/>
    </location>
</feature>
<feature type="sequence variant" description="In strain: COP; prostatic cancer cell lines." evidence="11">
    <original>H</original>
    <variation>D</variation>
    <location>
        <position position="1257"/>
    </location>
</feature>
<feature type="sequence variant" description="In strain: COP; prostatic cancer cell lines." evidence="11">
    <original>D</original>
    <variation>G</variation>
    <location>
        <position position="1755"/>
    </location>
</feature>
<feature type="sequence variant" description="In strain: COP; prostatic cancer cell lines." evidence="11">
    <original>E</original>
    <variation>K</variation>
    <location>
        <position position="1803"/>
    </location>
</feature>
<feature type="mutagenesis site" description="Strongly reduced sensitivity to tetrodotoxin." evidence="5">
    <original>Y</original>
    <variation>C</variation>
    <variation>N</variation>
    <location>
        <position position="401"/>
    </location>
</feature>
<feature type="mutagenesis site" description="Strongly reduced sensitivity to saxitoxin." evidence="6">
    <original>MD</original>
    <variation>TI</variation>
    <location>
        <begin position="1240"/>
        <end position="1241"/>
    </location>
</feature>
<feature type="mutagenesis site" description="Loss of rapid channel inactivation." evidence="9">
    <location>
        <begin position="1303"/>
        <end position="1305"/>
    </location>
</feature>
<feature type="mutagenesis site" description="Become sensitive to the spider beta/delta-theraphotoxin-Pre1a, which inhibits inactivation of the channel." evidence="10">
    <original>Y</original>
    <variation>S</variation>
    <location>
        <position position="1379"/>
    </location>
</feature>
<feature type="mutagenesis site" description="No change in sensitivity to the spider beta/delta-theraphotoxin-Pre1a." evidence="10">
    <original>N</original>
    <variation>R</variation>
    <location>
        <position position="1380"/>
    </location>
</feature>
<feature type="helix" evidence="17">
    <location>
        <begin position="1569"/>
        <end position="1594"/>
    </location>
</feature>
<feature type="helix" evidence="18">
    <location>
        <begin position="1722"/>
        <end position="1732"/>
    </location>
</feature>
<protein>
    <recommendedName>
        <fullName evidence="13">Sodium channel protein type 4 subunit alpha</fullName>
    </recommendedName>
    <alternativeName>
        <fullName>Mu-1</fullName>
    </alternativeName>
    <alternativeName>
        <fullName evidence="12">SkM1</fullName>
    </alternativeName>
    <alternativeName>
        <fullName>Sodium channel protein skeletal muscle subunit alpha</fullName>
    </alternativeName>
    <alternativeName>
        <fullName>Sodium channel protein type IV subunit alpha</fullName>
    </alternativeName>
    <alternativeName>
        <fullName evidence="14">Voltage-gated sodium channel subunit alpha Nav1.4</fullName>
    </alternativeName>
</protein>
<proteinExistence type="evidence at protein level"/>
<gene>
    <name evidence="15" type="primary">Scn4a</name>
</gene>
<evidence type="ECO:0000250" key="1">
    <source>
        <dbReference type="UniProtKB" id="P35499"/>
    </source>
</evidence>
<evidence type="ECO:0000255" key="2"/>
<evidence type="ECO:0000255" key="3">
    <source>
        <dbReference type="PROSITE-ProRule" id="PRU00116"/>
    </source>
</evidence>
<evidence type="ECO:0000256" key="4">
    <source>
        <dbReference type="SAM" id="MobiDB-lite"/>
    </source>
</evidence>
<evidence type="ECO:0000269" key="5">
    <source>
    </source>
</evidence>
<evidence type="ECO:0000269" key="6">
    <source>
    </source>
</evidence>
<evidence type="ECO:0000269" key="7">
    <source>
    </source>
</evidence>
<evidence type="ECO:0000269" key="8">
    <source>
    </source>
</evidence>
<evidence type="ECO:0000269" key="9">
    <source>
    </source>
</evidence>
<evidence type="ECO:0000269" key="10">
    <source>
    </source>
</evidence>
<evidence type="ECO:0000269" key="11">
    <source>
    </source>
</evidence>
<evidence type="ECO:0000303" key="12">
    <source>
    </source>
</evidence>
<evidence type="ECO:0000305" key="13"/>
<evidence type="ECO:0000305" key="14">
    <source>
    </source>
</evidence>
<evidence type="ECO:0000312" key="15">
    <source>
        <dbReference type="RGD" id="3636"/>
    </source>
</evidence>
<evidence type="ECO:0007744" key="16">
    <source>
    </source>
</evidence>
<evidence type="ECO:0007829" key="17">
    <source>
        <dbReference type="PDB" id="5JR0"/>
    </source>
</evidence>
<evidence type="ECO:0007829" key="18">
    <source>
        <dbReference type="PDB" id="6MUE"/>
    </source>
</evidence>